<accession>C3NF67</accession>
<organism>
    <name type="scientific">Saccharolobus islandicus (strain Y.N.15.51 / Yellowstone #2)</name>
    <name type="common">Sulfolobus islandicus</name>
    <dbReference type="NCBI Taxonomy" id="419942"/>
    <lineage>
        <taxon>Archaea</taxon>
        <taxon>Thermoproteota</taxon>
        <taxon>Thermoprotei</taxon>
        <taxon>Sulfolobales</taxon>
        <taxon>Sulfolobaceae</taxon>
        <taxon>Saccharolobus</taxon>
    </lineage>
</organism>
<protein>
    <recommendedName>
        <fullName evidence="1">Glutamyl-tRNA reductase</fullName>
        <shortName evidence="1">GluTR</shortName>
        <ecNumber evidence="1">1.2.1.70</ecNumber>
    </recommendedName>
</protein>
<comment type="function">
    <text evidence="1">Catalyzes the NADPH-dependent reduction of glutamyl-tRNA(Glu) to glutamate 1-semialdehyde (GSA).</text>
</comment>
<comment type="catalytic activity">
    <reaction evidence="1">
        <text>(S)-4-amino-5-oxopentanoate + tRNA(Glu) + NADP(+) = L-glutamyl-tRNA(Glu) + NADPH + H(+)</text>
        <dbReference type="Rhea" id="RHEA:12344"/>
        <dbReference type="Rhea" id="RHEA-COMP:9663"/>
        <dbReference type="Rhea" id="RHEA-COMP:9680"/>
        <dbReference type="ChEBI" id="CHEBI:15378"/>
        <dbReference type="ChEBI" id="CHEBI:57501"/>
        <dbReference type="ChEBI" id="CHEBI:57783"/>
        <dbReference type="ChEBI" id="CHEBI:58349"/>
        <dbReference type="ChEBI" id="CHEBI:78442"/>
        <dbReference type="ChEBI" id="CHEBI:78520"/>
        <dbReference type="EC" id="1.2.1.70"/>
    </reaction>
</comment>
<comment type="pathway">
    <text evidence="1">Porphyrin-containing compound metabolism; protoporphyrin-IX biosynthesis; 5-aminolevulinate from L-glutamyl-tRNA(Glu): step 1/2.</text>
</comment>
<comment type="subunit">
    <text evidence="1">Homodimer.</text>
</comment>
<comment type="domain">
    <text evidence="1">Possesses an unusual extended V-shaped dimeric structure with each monomer consisting of three distinct domains arranged along a curved 'spinal' alpha-helix. The N-terminal catalytic domain specifically recognizes the glutamate moiety of the substrate. The second domain is the NADPH-binding domain, and the third C-terminal domain is responsible for dimerization.</text>
</comment>
<comment type="miscellaneous">
    <text evidence="1">During catalysis, the active site Cys acts as a nucleophile attacking the alpha-carbonyl group of tRNA-bound glutamate with the formation of a thioester intermediate between enzyme and glutamate, and the concomitant release of tRNA(Glu). The thioester intermediate is finally reduced by direct hydride transfer from NADPH, to form the product GSA.</text>
</comment>
<comment type="similarity">
    <text evidence="1">Belongs to the glutamyl-tRNA reductase family.</text>
</comment>
<gene>
    <name evidence="1" type="primary">hemA</name>
    <name type="ordered locus">YN1551_0841</name>
</gene>
<sequence>MTSNEELLQNYCSILFTYKTIGISNLHLYYFRETEIKSLRQLINAEFAILQTCNRVEIYLYSNTNTISEINKMIQYLNNVHNEPIGNQARVICGKDSIKHLFLVASGADSLSIGEYEILSQIRSTIDMFKKLGFSGKYLQILFERAIKVGRKVREETSISKGKVGIYSLAIDEAKRQFNNFYDRKIVIVGAGEMGQKIANMLYNEGVKNVTIMNRTVEKAKQLALKFGYNYEKLDLDKLGSFDIAFISISHENLRLENKWNTLIVDITVPPLFTGNNVITLEELEKISKLNFKAREEELVKINKLVEDGIDELIYDYKKEIYSEFMSKIMKRVETIRENEIVRAYKELEKLGINNQQVKEILDLMTRSIIKKSFQPLFDNVRSLVFDGENSINYINFLIDIFKDGNIPIFETKKIKKKQISKRSSS</sequence>
<evidence type="ECO:0000255" key="1">
    <source>
        <dbReference type="HAMAP-Rule" id="MF_00087"/>
    </source>
</evidence>
<proteinExistence type="inferred from homology"/>
<name>HEM1_SACI1</name>
<feature type="chain" id="PRO_1000202646" description="Glutamyl-tRNA reductase">
    <location>
        <begin position="1"/>
        <end position="426"/>
    </location>
</feature>
<feature type="active site" description="Nucleophile" evidence="1">
    <location>
        <position position="53"/>
    </location>
</feature>
<feature type="binding site" evidence="1">
    <location>
        <begin position="52"/>
        <end position="55"/>
    </location>
    <ligand>
        <name>substrate</name>
    </ligand>
</feature>
<feature type="binding site" evidence="1">
    <location>
        <position position="110"/>
    </location>
    <ligand>
        <name>substrate</name>
    </ligand>
</feature>
<feature type="binding site" evidence="1">
    <location>
        <begin position="115"/>
        <end position="117"/>
    </location>
    <ligand>
        <name>substrate</name>
    </ligand>
</feature>
<feature type="binding site" evidence="1">
    <location>
        <position position="121"/>
    </location>
    <ligand>
        <name>substrate</name>
    </ligand>
</feature>
<feature type="binding site" evidence="1">
    <location>
        <begin position="190"/>
        <end position="195"/>
    </location>
    <ligand>
        <name>NADP(+)</name>
        <dbReference type="ChEBI" id="CHEBI:58349"/>
    </ligand>
</feature>
<feature type="site" description="Important for activity" evidence="1">
    <location>
        <position position="100"/>
    </location>
</feature>
<dbReference type="EC" id="1.2.1.70" evidence="1"/>
<dbReference type="EMBL" id="CP001404">
    <property type="protein sequence ID" value="ACP47963.1"/>
    <property type="molecule type" value="Genomic_DNA"/>
</dbReference>
<dbReference type="RefSeq" id="WP_012711926.1">
    <property type="nucleotide sequence ID" value="NC_012623.1"/>
</dbReference>
<dbReference type="SMR" id="C3NF67"/>
<dbReference type="KEGG" id="sin:YN1551_0841"/>
<dbReference type="HOGENOM" id="CLU_035113_0_0_2"/>
<dbReference type="UniPathway" id="UPA00251">
    <property type="reaction ID" value="UER00316"/>
</dbReference>
<dbReference type="Proteomes" id="UP000006818">
    <property type="component" value="Chromosome"/>
</dbReference>
<dbReference type="GO" id="GO:0008883">
    <property type="term" value="F:glutamyl-tRNA reductase activity"/>
    <property type="evidence" value="ECO:0007669"/>
    <property type="project" value="UniProtKB-UniRule"/>
</dbReference>
<dbReference type="GO" id="GO:0050661">
    <property type="term" value="F:NADP binding"/>
    <property type="evidence" value="ECO:0007669"/>
    <property type="project" value="InterPro"/>
</dbReference>
<dbReference type="GO" id="GO:0019353">
    <property type="term" value="P:protoporphyrinogen IX biosynthetic process from glutamate"/>
    <property type="evidence" value="ECO:0007669"/>
    <property type="project" value="TreeGrafter"/>
</dbReference>
<dbReference type="CDD" id="cd05213">
    <property type="entry name" value="NAD_bind_Glutamyl_tRNA_reduct"/>
    <property type="match status" value="1"/>
</dbReference>
<dbReference type="FunFam" id="3.30.460.30:FF:000002">
    <property type="entry name" value="Glutamyl-tRNA reductase"/>
    <property type="match status" value="1"/>
</dbReference>
<dbReference type="Gene3D" id="3.30.460.30">
    <property type="entry name" value="Glutamyl-tRNA reductase, N-terminal domain"/>
    <property type="match status" value="1"/>
</dbReference>
<dbReference type="Gene3D" id="3.40.50.720">
    <property type="entry name" value="NAD(P)-binding Rossmann-like Domain"/>
    <property type="match status" value="1"/>
</dbReference>
<dbReference type="HAMAP" id="MF_00087">
    <property type="entry name" value="Glu_tRNA_reductase"/>
    <property type="match status" value="1"/>
</dbReference>
<dbReference type="InterPro" id="IPR000343">
    <property type="entry name" value="4pyrrol_synth_GluRdtase"/>
</dbReference>
<dbReference type="InterPro" id="IPR015896">
    <property type="entry name" value="4pyrrol_synth_GluRdtase_dimer"/>
</dbReference>
<dbReference type="InterPro" id="IPR015895">
    <property type="entry name" value="4pyrrol_synth_GluRdtase_N"/>
</dbReference>
<dbReference type="InterPro" id="IPR018214">
    <property type="entry name" value="GluRdtase_CS"/>
</dbReference>
<dbReference type="InterPro" id="IPR036453">
    <property type="entry name" value="GluRdtase_dimer_dom_sf"/>
</dbReference>
<dbReference type="InterPro" id="IPR036343">
    <property type="entry name" value="GluRdtase_N_sf"/>
</dbReference>
<dbReference type="InterPro" id="IPR036291">
    <property type="entry name" value="NAD(P)-bd_dom_sf"/>
</dbReference>
<dbReference type="InterPro" id="IPR006151">
    <property type="entry name" value="Shikm_DH/Glu-tRNA_Rdtase"/>
</dbReference>
<dbReference type="NCBIfam" id="TIGR01035">
    <property type="entry name" value="hemA"/>
    <property type="match status" value="1"/>
</dbReference>
<dbReference type="NCBIfam" id="NF000751">
    <property type="entry name" value="PRK00045.4-1"/>
    <property type="match status" value="1"/>
</dbReference>
<dbReference type="NCBIfam" id="NF000752">
    <property type="entry name" value="PRK00045.4-2"/>
    <property type="match status" value="1"/>
</dbReference>
<dbReference type="PANTHER" id="PTHR43013">
    <property type="entry name" value="GLUTAMYL-TRNA REDUCTASE"/>
    <property type="match status" value="1"/>
</dbReference>
<dbReference type="PANTHER" id="PTHR43013:SF1">
    <property type="entry name" value="GLUTAMYL-TRNA REDUCTASE"/>
    <property type="match status" value="1"/>
</dbReference>
<dbReference type="Pfam" id="PF00745">
    <property type="entry name" value="GlutR_dimer"/>
    <property type="match status" value="1"/>
</dbReference>
<dbReference type="Pfam" id="PF05201">
    <property type="entry name" value="GlutR_N"/>
    <property type="match status" value="1"/>
</dbReference>
<dbReference type="Pfam" id="PF01488">
    <property type="entry name" value="Shikimate_DH"/>
    <property type="match status" value="1"/>
</dbReference>
<dbReference type="PIRSF" id="PIRSF000445">
    <property type="entry name" value="4pyrrol_synth_GluRdtase"/>
    <property type="match status" value="1"/>
</dbReference>
<dbReference type="SUPFAM" id="SSF69742">
    <property type="entry name" value="Glutamyl tRNA-reductase catalytic, N-terminal domain"/>
    <property type="match status" value="1"/>
</dbReference>
<dbReference type="SUPFAM" id="SSF69075">
    <property type="entry name" value="Glutamyl tRNA-reductase dimerization domain"/>
    <property type="match status" value="1"/>
</dbReference>
<dbReference type="SUPFAM" id="SSF51735">
    <property type="entry name" value="NAD(P)-binding Rossmann-fold domains"/>
    <property type="match status" value="1"/>
</dbReference>
<dbReference type="PROSITE" id="PS00747">
    <property type="entry name" value="GLUTR"/>
    <property type="match status" value="1"/>
</dbReference>
<reference key="1">
    <citation type="journal article" date="2009" name="Proc. Natl. Acad. Sci. U.S.A.">
        <title>Biogeography of the Sulfolobus islandicus pan-genome.</title>
        <authorList>
            <person name="Reno M.L."/>
            <person name="Held N.L."/>
            <person name="Fields C.J."/>
            <person name="Burke P.V."/>
            <person name="Whitaker R.J."/>
        </authorList>
    </citation>
    <scope>NUCLEOTIDE SEQUENCE [LARGE SCALE GENOMIC DNA]</scope>
    <source>
        <strain>Y.N.15.51 / Yellowstone #2</strain>
    </source>
</reference>
<keyword id="KW-0521">NADP</keyword>
<keyword id="KW-0560">Oxidoreductase</keyword>
<keyword id="KW-0627">Porphyrin biosynthesis</keyword>